<reference key="1">
    <citation type="journal article" date="2009" name="J. Bacteriol.">
        <title>Complete genome sequence of the extremophilic Bacillus cereus strain Q1 with industrial applications.</title>
        <authorList>
            <person name="Xiong Z."/>
            <person name="Jiang Y."/>
            <person name="Qi D."/>
            <person name="Lu H."/>
            <person name="Yang F."/>
            <person name="Yang J."/>
            <person name="Chen L."/>
            <person name="Sun L."/>
            <person name="Xu X."/>
            <person name="Xue Y."/>
            <person name="Zhu Y."/>
            <person name="Jin Q."/>
        </authorList>
    </citation>
    <scope>NUCLEOTIDE SEQUENCE [LARGE SCALE GENOMIC DNA]</scope>
    <source>
        <strain>Q1</strain>
    </source>
</reference>
<feature type="chain" id="PRO_1000134895" description="Phosphoribosylformylglycinamidine synthase subunit PurL">
    <location>
        <begin position="1"/>
        <end position="739"/>
    </location>
</feature>
<feature type="active site" evidence="1">
    <location>
        <position position="54"/>
    </location>
</feature>
<feature type="active site" description="Proton acceptor" evidence="1">
    <location>
        <position position="100"/>
    </location>
</feature>
<feature type="binding site" evidence="1">
    <location>
        <position position="57"/>
    </location>
    <ligand>
        <name>ATP</name>
        <dbReference type="ChEBI" id="CHEBI:30616"/>
    </ligand>
</feature>
<feature type="binding site" evidence="1">
    <location>
        <position position="96"/>
    </location>
    <ligand>
        <name>ATP</name>
        <dbReference type="ChEBI" id="CHEBI:30616"/>
    </ligand>
</feature>
<feature type="binding site" evidence="1">
    <location>
        <position position="98"/>
    </location>
    <ligand>
        <name>Mg(2+)</name>
        <dbReference type="ChEBI" id="CHEBI:18420"/>
        <label>1</label>
    </ligand>
</feature>
<feature type="binding site" evidence="1">
    <location>
        <begin position="99"/>
        <end position="102"/>
    </location>
    <ligand>
        <name>substrate</name>
    </ligand>
</feature>
<feature type="binding site" evidence="1">
    <location>
        <position position="121"/>
    </location>
    <ligand>
        <name>substrate</name>
    </ligand>
</feature>
<feature type="binding site" evidence="1">
    <location>
        <position position="122"/>
    </location>
    <ligand>
        <name>Mg(2+)</name>
        <dbReference type="ChEBI" id="CHEBI:18420"/>
        <label>2</label>
    </ligand>
</feature>
<feature type="binding site" evidence="1">
    <location>
        <position position="245"/>
    </location>
    <ligand>
        <name>substrate</name>
    </ligand>
</feature>
<feature type="binding site" evidence="1">
    <location>
        <position position="273"/>
    </location>
    <ligand>
        <name>Mg(2+)</name>
        <dbReference type="ChEBI" id="CHEBI:18420"/>
        <label>2</label>
    </ligand>
</feature>
<feature type="binding site" evidence="1">
    <location>
        <begin position="317"/>
        <end position="319"/>
    </location>
    <ligand>
        <name>substrate</name>
    </ligand>
</feature>
<feature type="binding site" evidence="1">
    <location>
        <position position="500"/>
    </location>
    <ligand>
        <name>ATP</name>
        <dbReference type="ChEBI" id="CHEBI:30616"/>
    </ligand>
</feature>
<feature type="binding site" evidence="1">
    <location>
        <position position="537"/>
    </location>
    <ligand>
        <name>ATP</name>
        <dbReference type="ChEBI" id="CHEBI:30616"/>
    </ligand>
</feature>
<feature type="binding site" evidence="1">
    <location>
        <position position="538"/>
    </location>
    <ligand>
        <name>Mg(2+)</name>
        <dbReference type="ChEBI" id="CHEBI:18420"/>
        <label>1</label>
    </ligand>
</feature>
<feature type="binding site" evidence="1">
    <location>
        <position position="540"/>
    </location>
    <ligand>
        <name>substrate</name>
    </ligand>
</feature>
<sequence length="739" mass="80189">MSLMLEPNPTQIKEERIYAEMGLTDEEFAMVEKILGRLPNYTETGLFSVMWSEHCSYKNSKPVLRKFPTTGERVLQGPGEGAGIVDIGDNQAVVFKMESHNHPSAIEPYQGAATGVGGIIRDVFSMGARPVALLNSLRFGELQSPRVKYLFEEVVAGIAGYGNCIGIPTVGGEVQFDPCYEGNPLVNAMCVGLINHEDIKKGQAHGAGNTVMYVGASTGRDGIHGATFASEELSESSEAKRPAVQVGDPFMEKLLIEACLELIQSDALVGIQDMGAAGLTSSSAEMASKAGMGIEMYLDDVPQRETGMTPYEMMLSESQERMLIVVKKGREQEIVDLFEKYGLAAVTMGKVTEDKMLRLFHKGEMVAEVPADALAEEAPIYHKPSQEAAYFAEFQQMKMETPKVENYKETLFALLQQPTIASKEWVYDQYDYQVRTSTVVTPGSDAAVVRVRGTEKGLAMTTDCNSRYIYLDPEVGGKIAVAEAARNIVCSGGEPLAITDCLNFGNPEKPEIFWQIEKSVDGMSEACRTLQTPVIGGNVSMYNERSGEAVYPTPTVGMVGLVHDLKHVTTQEFKQAGDLVYVIGETKAEFGGSELQKMLHGKIFGQSPSIDLDVELKRQKQILAAIQAGLVQSAHDVAEGGLAVAISESAIGANGLGATVKLDGEATAALFAESQSRFVITVKRENKEAFEKAVEAIQVGEVTNTNEVTIHNEENEVLLTANVDEMRKAWKGAIPCLLK</sequence>
<gene>
    <name evidence="1" type="primary">purL</name>
    <name type="ordered locus">BCQ_0346</name>
</gene>
<evidence type="ECO:0000255" key="1">
    <source>
        <dbReference type="HAMAP-Rule" id="MF_00420"/>
    </source>
</evidence>
<comment type="function">
    <text evidence="1">Part of the phosphoribosylformylglycinamidine synthase complex involved in the purines biosynthetic pathway. Catalyzes the ATP-dependent conversion of formylglycinamide ribonucleotide (FGAR) and glutamine to yield formylglycinamidine ribonucleotide (FGAM) and glutamate. The FGAM synthase complex is composed of three subunits. PurQ produces an ammonia molecule by converting glutamine to glutamate. PurL transfers the ammonia molecule to FGAR to form FGAM in an ATP-dependent manner. PurS interacts with PurQ and PurL and is thought to assist in the transfer of the ammonia molecule from PurQ to PurL.</text>
</comment>
<comment type="catalytic activity">
    <reaction evidence="1">
        <text>N(2)-formyl-N(1)-(5-phospho-beta-D-ribosyl)glycinamide + L-glutamine + ATP + H2O = 2-formamido-N(1)-(5-O-phospho-beta-D-ribosyl)acetamidine + L-glutamate + ADP + phosphate + H(+)</text>
        <dbReference type="Rhea" id="RHEA:17129"/>
        <dbReference type="ChEBI" id="CHEBI:15377"/>
        <dbReference type="ChEBI" id="CHEBI:15378"/>
        <dbReference type="ChEBI" id="CHEBI:29985"/>
        <dbReference type="ChEBI" id="CHEBI:30616"/>
        <dbReference type="ChEBI" id="CHEBI:43474"/>
        <dbReference type="ChEBI" id="CHEBI:58359"/>
        <dbReference type="ChEBI" id="CHEBI:147286"/>
        <dbReference type="ChEBI" id="CHEBI:147287"/>
        <dbReference type="ChEBI" id="CHEBI:456216"/>
        <dbReference type="EC" id="6.3.5.3"/>
    </reaction>
</comment>
<comment type="pathway">
    <text evidence="1">Purine metabolism; IMP biosynthesis via de novo pathway; 5-amino-1-(5-phospho-D-ribosyl)imidazole from N(2)-formyl-N(1)-(5-phospho-D-ribosyl)glycinamide: step 1/2.</text>
</comment>
<comment type="subunit">
    <text evidence="1">Monomer. Part of the FGAM synthase complex composed of 1 PurL, 1 PurQ and 2 PurS subunits.</text>
</comment>
<comment type="subcellular location">
    <subcellularLocation>
        <location evidence="1">Cytoplasm</location>
    </subcellularLocation>
</comment>
<comment type="similarity">
    <text evidence="1">Belongs to the FGAMS family.</text>
</comment>
<keyword id="KW-0067">ATP-binding</keyword>
<keyword id="KW-0963">Cytoplasm</keyword>
<keyword id="KW-0436">Ligase</keyword>
<keyword id="KW-0460">Magnesium</keyword>
<keyword id="KW-0479">Metal-binding</keyword>
<keyword id="KW-0547">Nucleotide-binding</keyword>
<keyword id="KW-0658">Purine biosynthesis</keyword>
<organism>
    <name type="scientific">Bacillus cereus (strain Q1)</name>
    <dbReference type="NCBI Taxonomy" id="361100"/>
    <lineage>
        <taxon>Bacteria</taxon>
        <taxon>Bacillati</taxon>
        <taxon>Bacillota</taxon>
        <taxon>Bacilli</taxon>
        <taxon>Bacillales</taxon>
        <taxon>Bacillaceae</taxon>
        <taxon>Bacillus</taxon>
        <taxon>Bacillus cereus group</taxon>
    </lineage>
</organism>
<protein>
    <recommendedName>
        <fullName evidence="1">Phosphoribosylformylglycinamidine synthase subunit PurL</fullName>
        <shortName evidence="1">FGAM synthase</shortName>
        <ecNumber evidence="1">6.3.5.3</ecNumber>
    </recommendedName>
    <alternativeName>
        <fullName evidence="1">Formylglycinamide ribonucleotide amidotransferase subunit II</fullName>
        <shortName evidence="1">FGAR amidotransferase II</shortName>
        <shortName evidence="1">FGAR-AT II</shortName>
    </alternativeName>
    <alternativeName>
        <fullName evidence="1">Glutamine amidotransferase PurL</fullName>
    </alternativeName>
    <alternativeName>
        <fullName evidence="1">Phosphoribosylformylglycinamidine synthase subunit II</fullName>
    </alternativeName>
</protein>
<dbReference type="EC" id="6.3.5.3" evidence="1"/>
<dbReference type="EMBL" id="CP000227">
    <property type="protein sequence ID" value="ACM10818.1"/>
    <property type="molecule type" value="Genomic_DNA"/>
</dbReference>
<dbReference type="SMR" id="B9J1K5"/>
<dbReference type="KEGG" id="bcq:BCQ_0346"/>
<dbReference type="HOGENOM" id="CLU_003100_0_1_9"/>
<dbReference type="UniPathway" id="UPA00074">
    <property type="reaction ID" value="UER00128"/>
</dbReference>
<dbReference type="Proteomes" id="UP000000441">
    <property type="component" value="Chromosome"/>
</dbReference>
<dbReference type="GO" id="GO:0005737">
    <property type="term" value="C:cytoplasm"/>
    <property type="evidence" value="ECO:0007669"/>
    <property type="project" value="UniProtKB-SubCell"/>
</dbReference>
<dbReference type="GO" id="GO:0005524">
    <property type="term" value="F:ATP binding"/>
    <property type="evidence" value="ECO:0007669"/>
    <property type="project" value="UniProtKB-UniRule"/>
</dbReference>
<dbReference type="GO" id="GO:0000287">
    <property type="term" value="F:magnesium ion binding"/>
    <property type="evidence" value="ECO:0007669"/>
    <property type="project" value="UniProtKB-UniRule"/>
</dbReference>
<dbReference type="GO" id="GO:0004642">
    <property type="term" value="F:phosphoribosylformylglycinamidine synthase activity"/>
    <property type="evidence" value="ECO:0007669"/>
    <property type="project" value="UniProtKB-UniRule"/>
</dbReference>
<dbReference type="GO" id="GO:0006189">
    <property type="term" value="P:'de novo' IMP biosynthetic process"/>
    <property type="evidence" value="ECO:0007669"/>
    <property type="project" value="UniProtKB-UniRule"/>
</dbReference>
<dbReference type="CDD" id="cd02203">
    <property type="entry name" value="PurL_repeat1"/>
    <property type="match status" value="1"/>
</dbReference>
<dbReference type="CDD" id="cd02204">
    <property type="entry name" value="PurL_repeat2"/>
    <property type="match status" value="1"/>
</dbReference>
<dbReference type="FunFam" id="3.30.1330.10:FF:000004">
    <property type="entry name" value="Phosphoribosylformylglycinamidine synthase subunit PurL"/>
    <property type="match status" value="1"/>
</dbReference>
<dbReference type="FunFam" id="3.30.1330.10:FF:000011">
    <property type="entry name" value="Phosphoribosylformylglycinamidine synthase subunit PurL"/>
    <property type="match status" value="1"/>
</dbReference>
<dbReference type="FunFam" id="3.90.650.10:FF:000009">
    <property type="entry name" value="Phosphoribosylformylglycinamidine synthase subunit PurL"/>
    <property type="match status" value="1"/>
</dbReference>
<dbReference type="FunFam" id="3.90.650.10:FF:000013">
    <property type="entry name" value="Phosphoribosylformylglycinamidine synthase subunit PurL"/>
    <property type="match status" value="1"/>
</dbReference>
<dbReference type="Gene3D" id="3.90.650.10">
    <property type="entry name" value="PurM-like C-terminal domain"/>
    <property type="match status" value="2"/>
</dbReference>
<dbReference type="Gene3D" id="3.30.1330.10">
    <property type="entry name" value="PurM-like, N-terminal domain"/>
    <property type="match status" value="2"/>
</dbReference>
<dbReference type="HAMAP" id="MF_00420">
    <property type="entry name" value="PurL_2"/>
    <property type="match status" value="1"/>
</dbReference>
<dbReference type="InterPro" id="IPR010074">
    <property type="entry name" value="PRibForGlyAmidine_synth_PurL"/>
</dbReference>
<dbReference type="InterPro" id="IPR041609">
    <property type="entry name" value="PurL_linker"/>
</dbReference>
<dbReference type="InterPro" id="IPR010918">
    <property type="entry name" value="PurM-like_C_dom"/>
</dbReference>
<dbReference type="InterPro" id="IPR036676">
    <property type="entry name" value="PurM-like_C_sf"/>
</dbReference>
<dbReference type="InterPro" id="IPR016188">
    <property type="entry name" value="PurM-like_N"/>
</dbReference>
<dbReference type="InterPro" id="IPR036921">
    <property type="entry name" value="PurM-like_N_sf"/>
</dbReference>
<dbReference type="NCBIfam" id="TIGR01736">
    <property type="entry name" value="FGAM_synth_II"/>
    <property type="match status" value="1"/>
</dbReference>
<dbReference type="NCBIfam" id="NF002290">
    <property type="entry name" value="PRK01213.1"/>
    <property type="match status" value="1"/>
</dbReference>
<dbReference type="PANTHER" id="PTHR43555">
    <property type="entry name" value="PHOSPHORIBOSYLFORMYLGLYCINAMIDINE SYNTHASE SUBUNIT PURL"/>
    <property type="match status" value="1"/>
</dbReference>
<dbReference type="PANTHER" id="PTHR43555:SF1">
    <property type="entry name" value="PHOSPHORIBOSYLFORMYLGLYCINAMIDINE SYNTHASE SUBUNIT PURL"/>
    <property type="match status" value="1"/>
</dbReference>
<dbReference type="Pfam" id="PF00586">
    <property type="entry name" value="AIRS"/>
    <property type="match status" value="2"/>
</dbReference>
<dbReference type="Pfam" id="PF02769">
    <property type="entry name" value="AIRS_C"/>
    <property type="match status" value="2"/>
</dbReference>
<dbReference type="Pfam" id="PF18072">
    <property type="entry name" value="FGAR-AT_linker"/>
    <property type="match status" value="1"/>
</dbReference>
<dbReference type="PIRSF" id="PIRSF001587">
    <property type="entry name" value="FGAM_synthase_II"/>
    <property type="match status" value="1"/>
</dbReference>
<dbReference type="SUPFAM" id="SSF56042">
    <property type="entry name" value="PurM C-terminal domain-like"/>
    <property type="match status" value="2"/>
</dbReference>
<dbReference type="SUPFAM" id="SSF55326">
    <property type="entry name" value="PurM N-terminal domain-like"/>
    <property type="match status" value="2"/>
</dbReference>
<accession>B9J1K5</accession>
<name>PURL_BACCQ</name>
<proteinExistence type="inferred from homology"/>